<protein>
    <recommendedName>
        <fullName evidence="1">Small ribosomal subunit protein uS7</fullName>
    </recommendedName>
    <alternativeName>
        <fullName evidence="2">30S ribosomal protein S7</fullName>
    </alternativeName>
</protein>
<name>RS7_ECOUT</name>
<evidence type="ECO:0000255" key="1">
    <source>
        <dbReference type="HAMAP-Rule" id="MF_00480"/>
    </source>
</evidence>
<evidence type="ECO:0000305" key="2"/>
<proteinExistence type="inferred from homology"/>
<reference key="1">
    <citation type="journal article" date="2006" name="Proc. Natl. Acad. Sci. U.S.A.">
        <title>Identification of genes subject to positive selection in uropathogenic strains of Escherichia coli: a comparative genomics approach.</title>
        <authorList>
            <person name="Chen S.L."/>
            <person name="Hung C.-S."/>
            <person name="Xu J."/>
            <person name="Reigstad C.S."/>
            <person name="Magrini V."/>
            <person name="Sabo A."/>
            <person name="Blasiar D."/>
            <person name="Bieri T."/>
            <person name="Meyer R.R."/>
            <person name="Ozersky P."/>
            <person name="Armstrong J.R."/>
            <person name="Fulton R.S."/>
            <person name="Latreille J.P."/>
            <person name="Spieth J."/>
            <person name="Hooton T.M."/>
            <person name="Mardis E.R."/>
            <person name="Hultgren S.J."/>
            <person name="Gordon J.I."/>
        </authorList>
    </citation>
    <scope>NUCLEOTIDE SEQUENCE [LARGE SCALE GENOMIC DNA]</scope>
    <source>
        <strain>UTI89 / UPEC</strain>
    </source>
</reference>
<keyword id="KW-0687">Ribonucleoprotein</keyword>
<keyword id="KW-0689">Ribosomal protein</keyword>
<keyword id="KW-0694">RNA-binding</keyword>
<keyword id="KW-0699">rRNA-binding</keyword>
<keyword id="KW-0820">tRNA-binding</keyword>
<comment type="function">
    <text evidence="1">One of the primary rRNA binding proteins, it binds directly to 16S rRNA where it nucleates assembly of the head domain of the 30S subunit. Is located at the subunit interface close to the decoding center, probably blocks exit of the E-site tRNA.</text>
</comment>
<comment type="subunit">
    <text evidence="1">Part of the 30S ribosomal subunit. Contacts proteins S9 and S11.</text>
</comment>
<comment type="similarity">
    <text evidence="1">Belongs to the universal ribosomal protein uS7 family.</text>
</comment>
<feature type="chain" id="PRO_1000014189" description="Small ribosomal subunit protein uS7">
    <location>
        <begin position="1"/>
        <end position="156"/>
    </location>
</feature>
<sequence>MPRRRVIGQRKILPDPKFGSELLAKFVNILMVDGKKSTAESIVYSALETLAQRSGKSELEAFEVALENVRPTVEVKSRRVGGSTYQVPVEVRPVRRNALAMRWIVEAARKRGDKSMALRLANELSDAAENKGTAVKKREDVHRMAEANKAFAHYRW</sequence>
<dbReference type="EMBL" id="CP000243">
    <property type="protein sequence ID" value="ABE09272.1"/>
    <property type="molecule type" value="Genomic_DNA"/>
</dbReference>
<dbReference type="RefSeq" id="WP_001138043.1">
    <property type="nucleotide sequence ID" value="NZ_CP064825.1"/>
</dbReference>
<dbReference type="SMR" id="Q1R5U2"/>
<dbReference type="GeneID" id="93778657"/>
<dbReference type="KEGG" id="eci:UTI89_C3843"/>
<dbReference type="HOGENOM" id="CLU_072226_1_1_6"/>
<dbReference type="Proteomes" id="UP000001952">
    <property type="component" value="Chromosome"/>
</dbReference>
<dbReference type="GO" id="GO:0015935">
    <property type="term" value="C:small ribosomal subunit"/>
    <property type="evidence" value="ECO:0007669"/>
    <property type="project" value="InterPro"/>
</dbReference>
<dbReference type="GO" id="GO:0019843">
    <property type="term" value="F:rRNA binding"/>
    <property type="evidence" value="ECO:0007669"/>
    <property type="project" value="UniProtKB-UniRule"/>
</dbReference>
<dbReference type="GO" id="GO:0003735">
    <property type="term" value="F:structural constituent of ribosome"/>
    <property type="evidence" value="ECO:0007669"/>
    <property type="project" value="InterPro"/>
</dbReference>
<dbReference type="GO" id="GO:0000049">
    <property type="term" value="F:tRNA binding"/>
    <property type="evidence" value="ECO:0007669"/>
    <property type="project" value="UniProtKB-UniRule"/>
</dbReference>
<dbReference type="GO" id="GO:0006412">
    <property type="term" value="P:translation"/>
    <property type="evidence" value="ECO:0007669"/>
    <property type="project" value="UniProtKB-UniRule"/>
</dbReference>
<dbReference type="CDD" id="cd14869">
    <property type="entry name" value="uS7_Bacteria"/>
    <property type="match status" value="1"/>
</dbReference>
<dbReference type="FunFam" id="1.10.455.10:FF:000001">
    <property type="entry name" value="30S ribosomal protein S7"/>
    <property type="match status" value="1"/>
</dbReference>
<dbReference type="Gene3D" id="1.10.455.10">
    <property type="entry name" value="Ribosomal protein S7 domain"/>
    <property type="match status" value="1"/>
</dbReference>
<dbReference type="HAMAP" id="MF_00480_B">
    <property type="entry name" value="Ribosomal_uS7_B"/>
    <property type="match status" value="1"/>
</dbReference>
<dbReference type="InterPro" id="IPR000235">
    <property type="entry name" value="Ribosomal_uS7"/>
</dbReference>
<dbReference type="InterPro" id="IPR005717">
    <property type="entry name" value="Ribosomal_uS7_bac/org-type"/>
</dbReference>
<dbReference type="InterPro" id="IPR020606">
    <property type="entry name" value="Ribosomal_uS7_CS"/>
</dbReference>
<dbReference type="InterPro" id="IPR023798">
    <property type="entry name" value="Ribosomal_uS7_dom"/>
</dbReference>
<dbReference type="InterPro" id="IPR036823">
    <property type="entry name" value="Ribosomal_uS7_dom_sf"/>
</dbReference>
<dbReference type="NCBIfam" id="TIGR01029">
    <property type="entry name" value="rpsG_bact"/>
    <property type="match status" value="1"/>
</dbReference>
<dbReference type="PANTHER" id="PTHR11205">
    <property type="entry name" value="RIBOSOMAL PROTEIN S7"/>
    <property type="match status" value="1"/>
</dbReference>
<dbReference type="Pfam" id="PF00177">
    <property type="entry name" value="Ribosomal_S7"/>
    <property type="match status" value="1"/>
</dbReference>
<dbReference type="PIRSF" id="PIRSF002122">
    <property type="entry name" value="RPS7p_RPS7a_RPS5e_RPS7o"/>
    <property type="match status" value="1"/>
</dbReference>
<dbReference type="SUPFAM" id="SSF47973">
    <property type="entry name" value="Ribosomal protein S7"/>
    <property type="match status" value="1"/>
</dbReference>
<dbReference type="PROSITE" id="PS00052">
    <property type="entry name" value="RIBOSOMAL_S7"/>
    <property type="match status" value="1"/>
</dbReference>
<accession>Q1R5U2</accession>
<gene>
    <name evidence="1" type="primary">rpsG</name>
    <name type="ordered locus">UTI89_C3843</name>
</gene>
<organism>
    <name type="scientific">Escherichia coli (strain UTI89 / UPEC)</name>
    <dbReference type="NCBI Taxonomy" id="364106"/>
    <lineage>
        <taxon>Bacteria</taxon>
        <taxon>Pseudomonadati</taxon>
        <taxon>Pseudomonadota</taxon>
        <taxon>Gammaproteobacteria</taxon>
        <taxon>Enterobacterales</taxon>
        <taxon>Enterobacteriaceae</taxon>
        <taxon>Escherichia</taxon>
    </lineage>
</organism>